<proteinExistence type="evidence at transcript level"/>
<name>CC172_BOVIN</name>
<organism>
    <name type="scientific">Bos taurus</name>
    <name type="common">Bovine</name>
    <dbReference type="NCBI Taxonomy" id="9913"/>
    <lineage>
        <taxon>Eukaryota</taxon>
        <taxon>Metazoa</taxon>
        <taxon>Chordata</taxon>
        <taxon>Craniata</taxon>
        <taxon>Vertebrata</taxon>
        <taxon>Euteleostomi</taxon>
        <taxon>Mammalia</taxon>
        <taxon>Eutheria</taxon>
        <taxon>Laurasiatheria</taxon>
        <taxon>Artiodactyla</taxon>
        <taxon>Ruminantia</taxon>
        <taxon>Pecora</taxon>
        <taxon>Bovidae</taxon>
        <taxon>Bovinae</taxon>
        <taxon>Bos</taxon>
    </lineage>
</organism>
<sequence>MSLESLFQHIIFSEHQAEESRRLMREVRSEINRCREKIKKAAEQLNKEKIQLESKVQQFSEKAFLLQLLKTHENALERQCNEITNQRNMLLQTFEATKRRVTEEEEKFIKEITDFNNEYELTKKRERLMKENVKIQISDLENQANILKMEMKSMEHDSDLLNELQRQKNELIQELSTLQRKLKGFEDKKHEAICTTKYLEAEKIKINEKPQNDAECLRLKKELELYKEDDMQSVHDALQTEIEFLELTLAQKDHQETNNL</sequence>
<protein>
    <recommendedName>
        <fullName>Coiled-coil domain-containing protein 172</fullName>
    </recommendedName>
</protein>
<dbReference type="EMBL" id="BC110215">
    <property type="protein sequence ID" value="AAI10216.1"/>
    <property type="molecule type" value="mRNA"/>
</dbReference>
<dbReference type="RefSeq" id="NP_001069301.1">
    <property type="nucleotide sequence ID" value="NM_001075833.2"/>
</dbReference>
<dbReference type="SMR" id="Q2YDH9"/>
<dbReference type="FunCoup" id="Q2YDH9">
    <property type="interactions" value="69"/>
</dbReference>
<dbReference type="STRING" id="9913.ENSBTAP00000043167"/>
<dbReference type="PaxDb" id="9913-ENSBTAP00000043167"/>
<dbReference type="Ensembl" id="ENSBTAT00000045806.3">
    <property type="protein sequence ID" value="ENSBTAP00000043167.3"/>
    <property type="gene ID" value="ENSBTAG00000032299.4"/>
</dbReference>
<dbReference type="GeneID" id="522573"/>
<dbReference type="KEGG" id="bta:522573"/>
<dbReference type="CTD" id="374355"/>
<dbReference type="VEuPathDB" id="HostDB:ENSBTAG00000032299"/>
<dbReference type="VGNC" id="VGNC:26869">
    <property type="gene designation" value="CCDC172"/>
</dbReference>
<dbReference type="eggNOG" id="ENOG502S87V">
    <property type="taxonomic scope" value="Eukaryota"/>
</dbReference>
<dbReference type="GeneTree" id="ENSGT00390000005203"/>
<dbReference type="InParanoid" id="Q2YDH9"/>
<dbReference type="OMA" id="RQCNEIT"/>
<dbReference type="OrthoDB" id="10055570at2759"/>
<dbReference type="Proteomes" id="UP000009136">
    <property type="component" value="Chromosome 26"/>
</dbReference>
<dbReference type="Bgee" id="ENSBTAG00000032299">
    <property type="expression patterns" value="Expressed in semen and 14 other cell types or tissues"/>
</dbReference>
<dbReference type="GO" id="GO:0005737">
    <property type="term" value="C:cytoplasm"/>
    <property type="evidence" value="ECO:0000250"/>
    <property type="project" value="UniProtKB"/>
</dbReference>
<dbReference type="GO" id="GO:0097225">
    <property type="term" value="C:sperm midpiece"/>
    <property type="evidence" value="ECO:0000250"/>
    <property type="project" value="UniProtKB"/>
</dbReference>
<dbReference type="InterPro" id="IPR029618">
    <property type="entry name" value="CCDC172"/>
</dbReference>
<dbReference type="PANTHER" id="PTHR22419">
    <property type="entry name" value="COILED-COIL DOMAIN-CONTAINING PROTEIN 172"/>
    <property type="match status" value="1"/>
</dbReference>
<dbReference type="PANTHER" id="PTHR22419:SF2">
    <property type="entry name" value="COILED-COIL DOMAIN-CONTAINING PROTEIN 172"/>
    <property type="match status" value="1"/>
</dbReference>
<keyword id="KW-0966">Cell projection</keyword>
<keyword id="KW-0175">Coiled coil</keyword>
<keyword id="KW-0963">Cytoplasm</keyword>
<keyword id="KW-1185">Reference proteome</keyword>
<comment type="subunit">
    <text evidence="2">May interact with TEKT2.</text>
</comment>
<comment type="subcellular location">
    <subcellularLocation>
        <location evidence="2">Cytoplasm</location>
    </subcellularLocation>
    <subcellularLocation>
        <location evidence="1">Cell projection</location>
        <location evidence="1">Cilium</location>
    </subcellularLocation>
    <text evidence="1 2">In spermatozoa, localized in the middle piece, predominantly concentrated at the mitochondrial sheath of the flagella and to a lesser extent with outer dense fibers (ODF) (By similarity). Colocalized with TEKT2 at the perinuclear region (By similarity).</text>
</comment>
<comment type="similarity">
    <text evidence="4">Belongs to the CCDC172 family.</text>
</comment>
<accession>Q2YDH9</accession>
<reference key="1">
    <citation type="submission" date="2005-11" db="EMBL/GenBank/DDBJ databases">
        <authorList>
            <consortium name="NIH - Mammalian Gene Collection (MGC) project"/>
        </authorList>
    </citation>
    <scope>NUCLEOTIDE SEQUENCE [LARGE SCALE MRNA]</scope>
    <source>
        <strain>Crossbred X Angus</strain>
        <tissue>Liver</tissue>
    </source>
</reference>
<gene>
    <name type="primary">CCDC172</name>
</gene>
<feature type="chain" id="PRO_0000344512" description="Coiled-coil domain-containing protein 172">
    <location>
        <begin position="1"/>
        <end position="260"/>
    </location>
</feature>
<feature type="coiled-coil region" evidence="3">
    <location>
        <begin position="13"/>
        <end position="194"/>
    </location>
</feature>
<evidence type="ECO:0000250" key="1">
    <source>
        <dbReference type="UniProtKB" id="Q6AXT4"/>
    </source>
</evidence>
<evidence type="ECO:0000250" key="2">
    <source>
        <dbReference type="UniProtKB" id="Q810N9"/>
    </source>
</evidence>
<evidence type="ECO:0000255" key="3"/>
<evidence type="ECO:0000305" key="4"/>